<reference key="1">
    <citation type="submission" date="2004-12" db="EMBL/GenBank/DDBJ databases">
        <title>The genome sequence of Borrelia hermsii and Borrelia turicatae: comparative analysis of two agents of endemic N. America relapsing fever.</title>
        <authorList>
            <person name="Porcella S.F."/>
            <person name="Raffel S.J."/>
            <person name="Schrumpf M.E."/>
            <person name="Montgomery B."/>
            <person name="Smith T."/>
            <person name="Schwan T.G."/>
        </authorList>
    </citation>
    <scope>NUCLEOTIDE SEQUENCE [LARGE SCALE GENOMIC DNA]</scope>
    <source>
        <strain>HS1 / DAH</strain>
    </source>
</reference>
<keyword id="KW-0997">Cell inner membrane</keyword>
<keyword id="KW-1003">Cell membrane</keyword>
<keyword id="KW-0143">Chaperone</keyword>
<keyword id="KW-0472">Membrane</keyword>
<keyword id="KW-0653">Protein transport</keyword>
<keyword id="KW-0812">Transmembrane</keyword>
<keyword id="KW-1133">Transmembrane helix</keyword>
<keyword id="KW-0813">Transport</keyword>
<sequence>MSQSKRILRAIYLSLFFIGIFMIIDDIFFSHKSPSVMDKEIGFNLDKDFDIDNSSIDEDYALNLSANSKDIDVETGIYYATFSTFRGDLISLKLKDHLNLEKEPTEMVKVNMDRESLFYVTLDNLTRDLFSYDRVDDYTHDFKTNFEYNGKFYEYIKRYTFSNKGEYLIKLEIFLNNIDANDNSDIDSYKFVLSSDIEKLSERGKLQYNNYLSQAVYFDTKLRYGKDGLSVISPKWVGSGTKYFEVLVSKENMNVEFKQESKILKAFILNKVGNKNISDTFYIYAGPKDNGYLDLFNKEDLNSFGLSNVEFGMSVEKSLLYFIQVPMQLIMQIFYNVIPNWGLSIMFLTIVVRILIFPLTFKSFRATAELSKLQPKMKEIQVKFKNDPKRLNEEMGKLYREEGVNPLGGCFPILLQLPVFFALYGLVNNFFLLRGASFIPGWIDDLSIGDSIYYFGYKVFMWTDIRILPFIMMVTQLISTIISSNVSFKSLGSQQKILYFGMPIMFFFILYDMPSGLLIYWITTNIFTILQQYYIKMNVSERRNR</sequence>
<evidence type="ECO:0000255" key="1">
    <source>
        <dbReference type="HAMAP-Rule" id="MF_01810"/>
    </source>
</evidence>
<comment type="function">
    <text evidence="1">Required for the insertion and/or proper folding and/or complex formation of integral membrane proteins into the membrane. Involved in integration of membrane proteins that insert both dependently and independently of the Sec translocase complex, as well as at least some lipoproteins. Aids folding of multispanning membrane proteins.</text>
</comment>
<comment type="subunit">
    <text evidence="1">Interacts with the Sec translocase complex via SecD. Specifically interacts with transmembrane segments of nascent integral membrane proteins during membrane integration.</text>
</comment>
<comment type="subcellular location">
    <subcellularLocation>
        <location evidence="1">Cell inner membrane</location>
        <topology evidence="1">Multi-pass membrane protein</topology>
    </subcellularLocation>
</comment>
<comment type="similarity">
    <text evidence="1">Belongs to the OXA1/ALB3/YidC family. Type 1 subfamily.</text>
</comment>
<proteinExistence type="inferred from homology"/>
<accession>B2S0E5</accession>
<feature type="chain" id="PRO_1000187633" description="Membrane protein insertase YidC">
    <location>
        <begin position="1"/>
        <end position="545"/>
    </location>
</feature>
<feature type="transmembrane region" description="Helical" evidence="1">
    <location>
        <begin position="10"/>
        <end position="30"/>
    </location>
</feature>
<feature type="transmembrane region" description="Helical" evidence="1">
    <location>
        <begin position="319"/>
        <end position="339"/>
    </location>
</feature>
<feature type="transmembrane region" description="Helical" evidence="1">
    <location>
        <begin position="341"/>
        <end position="361"/>
    </location>
</feature>
<feature type="transmembrane region" description="Helical" evidence="1">
    <location>
        <begin position="407"/>
        <end position="427"/>
    </location>
</feature>
<feature type="transmembrane region" description="Helical" evidence="1">
    <location>
        <begin position="467"/>
        <end position="487"/>
    </location>
</feature>
<feature type="transmembrane region" description="Helical" evidence="1">
    <location>
        <begin position="502"/>
        <end position="522"/>
    </location>
</feature>
<dbReference type="EMBL" id="CP000048">
    <property type="protein sequence ID" value="AAX16951.1"/>
    <property type="molecule type" value="Genomic_DNA"/>
</dbReference>
<dbReference type="RefSeq" id="WP_012422207.1">
    <property type="nucleotide sequence ID" value="NZ_CP073136.1"/>
</dbReference>
<dbReference type="SMR" id="B2S0E5"/>
<dbReference type="GeneID" id="71843254"/>
<dbReference type="KEGG" id="bhr:BH0442"/>
<dbReference type="HOGENOM" id="CLU_016535_2_0_12"/>
<dbReference type="Proteomes" id="UP000008834">
    <property type="component" value="Chromosome"/>
</dbReference>
<dbReference type="GO" id="GO:0005886">
    <property type="term" value="C:plasma membrane"/>
    <property type="evidence" value="ECO:0007669"/>
    <property type="project" value="UniProtKB-SubCell"/>
</dbReference>
<dbReference type="GO" id="GO:0032977">
    <property type="term" value="F:membrane insertase activity"/>
    <property type="evidence" value="ECO:0007669"/>
    <property type="project" value="InterPro"/>
</dbReference>
<dbReference type="GO" id="GO:0051205">
    <property type="term" value="P:protein insertion into membrane"/>
    <property type="evidence" value="ECO:0007669"/>
    <property type="project" value="TreeGrafter"/>
</dbReference>
<dbReference type="GO" id="GO:0015031">
    <property type="term" value="P:protein transport"/>
    <property type="evidence" value="ECO:0007669"/>
    <property type="project" value="UniProtKB-KW"/>
</dbReference>
<dbReference type="CDD" id="cd20070">
    <property type="entry name" value="5TM_YidC_Alb3"/>
    <property type="match status" value="1"/>
</dbReference>
<dbReference type="Gene3D" id="2.70.98.90">
    <property type="match status" value="1"/>
</dbReference>
<dbReference type="HAMAP" id="MF_01810">
    <property type="entry name" value="YidC_type1"/>
    <property type="match status" value="1"/>
</dbReference>
<dbReference type="InterPro" id="IPR019998">
    <property type="entry name" value="Membr_insert_YidC"/>
</dbReference>
<dbReference type="InterPro" id="IPR001708">
    <property type="entry name" value="YidC/ALB3/OXA1/COX18"/>
</dbReference>
<dbReference type="InterPro" id="IPR028055">
    <property type="entry name" value="YidC/Oxa/ALB_C"/>
</dbReference>
<dbReference type="InterPro" id="IPR047196">
    <property type="entry name" value="YidC_ALB_C"/>
</dbReference>
<dbReference type="InterPro" id="IPR038221">
    <property type="entry name" value="YidC_periplasmic_sf"/>
</dbReference>
<dbReference type="NCBIfam" id="NF002358">
    <property type="entry name" value="PRK01318.2-5"/>
    <property type="match status" value="1"/>
</dbReference>
<dbReference type="NCBIfam" id="TIGR03592">
    <property type="entry name" value="yidC_oxa1_cterm"/>
    <property type="match status" value="1"/>
</dbReference>
<dbReference type="PANTHER" id="PTHR12428:SF65">
    <property type="entry name" value="CYTOCHROME C OXIDASE ASSEMBLY PROTEIN COX18, MITOCHONDRIAL"/>
    <property type="match status" value="1"/>
</dbReference>
<dbReference type="PANTHER" id="PTHR12428">
    <property type="entry name" value="OXA1"/>
    <property type="match status" value="1"/>
</dbReference>
<dbReference type="Pfam" id="PF02096">
    <property type="entry name" value="60KD_IMP"/>
    <property type="match status" value="1"/>
</dbReference>
<dbReference type="PRINTS" id="PR00701">
    <property type="entry name" value="60KDINNERMP"/>
</dbReference>
<dbReference type="PRINTS" id="PR01900">
    <property type="entry name" value="YIDCPROTEIN"/>
</dbReference>
<name>YIDC_BORHD</name>
<protein>
    <recommendedName>
        <fullName evidence="1">Membrane protein insertase YidC</fullName>
    </recommendedName>
    <alternativeName>
        <fullName evidence="1">Foldase YidC</fullName>
    </alternativeName>
    <alternativeName>
        <fullName evidence="1">Membrane integrase YidC</fullName>
    </alternativeName>
    <alternativeName>
        <fullName evidence="1">Membrane protein YidC</fullName>
    </alternativeName>
</protein>
<gene>
    <name evidence="1" type="primary">yidC</name>
    <name type="ordered locus">BH0442</name>
</gene>
<organism>
    <name type="scientific">Borrelia hermsii (strain HS1 / DAH)</name>
    <dbReference type="NCBI Taxonomy" id="314723"/>
    <lineage>
        <taxon>Bacteria</taxon>
        <taxon>Pseudomonadati</taxon>
        <taxon>Spirochaetota</taxon>
        <taxon>Spirochaetia</taxon>
        <taxon>Spirochaetales</taxon>
        <taxon>Borreliaceae</taxon>
        <taxon>Borrelia</taxon>
    </lineage>
</organism>